<protein>
    <recommendedName>
        <fullName evidence="1">tRNA pseudouridine synthase B</fullName>
        <ecNumber evidence="1">5.4.99.25</ecNumber>
    </recommendedName>
    <alternativeName>
        <fullName evidence="1">tRNA pseudouridine(55) synthase</fullName>
        <shortName evidence="1">Psi55 synthase</shortName>
    </alternativeName>
    <alternativeName>
        <fullName evidence="1">tRNA pseudouridylate synthase</fullName>
    </alternativeName>
    <alternativeName>
        <fullName evidence="1">tRNA-uridine isomerase</fullName>
    </alternativeName>
</protein>
<dbReference type="EC" id="5.4.99.25" evidence="1"/>
<dbReference type="EMBL" id="CP000112">
    <property type="protein sequence ID" value="ABB39959.1"/>
    <property type="molecule type" value="Genomic_DNA"/>
</dbReference>
<dbReference type="RefSeq" id="WP_011368914.1">
    <property type="nucleotide sequence ID" value="NC_007519.1"/>
</dbReference>
<dbReference type="SMR" id="Q30WI7"/>
<dbReference type="STRING" id="207559.Dde_3165"/>
<dbReference type="KEGG" id="dde:Dde_3165"/>
<dbReference type="eggNOG" id="COG0130">
    <property type="taxonomic scope" value="Bacteria"/>
</dbReference>
<dbReference type="HOGENOM" id="CLU_032087_0_1_7"/>
<dbReference type="Proteomes" id="UP000002710">
    <property type="component" value="Chromosome"/>
</dbReference>
<dbReference type="GO" id="GO:0003723">
    <property type="term" value="F:RNA binding"/>
    <property type="evidence" value="ECO:0007669"/>
    <property type="project" value="InterPro"/>
</dbReference>
<dbReference type="GO" id="GO:0160148">
    <property type="term" value="F:tRNA pseudouridine(55) synthase activity"/>
    <property type="evidence" value="ECO:0007669"/>
    <property type="project" value="UniProtKB-EC"/>
</dbReference>
<dbReference type="GO" id="GO:1990481">
    <property type="term" value="P:mRNA pseudouridine synthesis"/>
    <property type="evidence" value="ECO:0007669"/>
    <property type="project" value="TreeGrafter"/>
</dbReference>
<dbReference type="GO" id="GO:0031119">
    <property type="term" value="P:tRNA pseudouridine synthesis"/>
    <property type="evidence" value="ECO:0007669"/>
    <property type="project" value="UniProtKB-UniRule"/>
</dbReference>
<dbReference type="CDD" id="cd02573">
    <property type="entry name" value="PseudoU_synth_EcTruB"/>
    <property type="match status" value="1"/>
</dbReference>
<dbReference type="Gene3D" id="3.30.2350.10">
    <property type="entry name" value="Pseudouridine synthase"/>
    <property type="match status" value="1"/>
</dbReference>
<dbReference type="HAMAP" id="MF_01080">
    <property type="entry name" value="TruB_bact"/>
    <property type="match status" value="1"/>
</dbReference>
<dbReference type="InterPro" id="IPR020103">
    <property type="entry name" value="PsdUridine_synth_cat_dom_sf"/>
</dbReference>
<dbReference type="InterPro" id="IPR002501">
    <property type="entry name" value="PsdUridine_synth_N"/>
</dbReference>
<dbReference type="InterPro" id="IPR014780">
    <property type="entry name" value="tRNA_psdUridine_synth_TruB"/>
</dbReference>
<dbReference type="InterPro" id="IPR032819">
    <property type="entry name" value="TruB_C"/>
</dbReference>
<dbReference type="NCBIfam" id="TIGR00431">
    <property type="entry name" value="TruB"/>
    <property type="match status" value="1"/>
</dbReference>
<dbReference type="PANTHER" id="PTHR13767:SF2">
    <property type="entry name" value="PSEUDOURIDYLATE SYNTHASE TRUB1"/>
    <property type="match status" value="1"/>
</dbReference>
<dbReference type="PANTHER" id="PTHR13767">
    <property type="entry name" value="TRNA-PSEUDOURIDINE SYNTHASE"/>
    <property type="match status" value="1"/>
</dbReference>
<dbReference type="Pfam" id="PF16198">
    <property type="entry name" value="TruB_C_2"/>
    <property type="match status" value="1"/>
</dbReference>
<dbReference type="Pfam" id="PF01509">
    <property type="entry name" value="TruB_N"/>
    <property type="match status" value="1"/>
</dbReference>
<dbReference type="SUPFAM" id="SSF55120">
    <property type="entry name" value="Pseudouridine synthase"/>
    <property type="match status" value="1"/>
</dbReference>
<accession>Q30WI7</accession>
<comment type="function">
    <text evidence="1">Responsible for synthesis of pseudouridine from uracil-55 in the psi GC loop of transfer RNAs.</text>
</comment>
<comment type="catalytic activity">
    <reaction evidence="1">
        <text>uridine(55) in tRNA = pseudouridine(55) in tRNA</text>
        <dbReference type="Rhea" id="RHEA:42532"/>
        <dbReference type="Rhea" id="RHEA-COMP:10101"/>
        <dbReference type="Rhea" id="RHEA-COMP:10102"/>
        <dbReference type="ChEBI" id="CHEBI:65314"/>
        <dbReference type="ChEBI" id="CHEBI:65315"/>
        <dbReference type="EC" id="5.4.99.25"/>
    </reaction>
</comment>
<comment type="similarity">
    <text evidence="1">Belongs to the pseudouridine synthase TruB family. Type 1 subfamily.</text>
</comment>
<organism>
    <name type="scientific">Oleidesulfovibrio alaskensis (strain ATCC BAA-1058 / DSM 17464 / G20)</name>
    <name type="common">Desulfovibrio alaskensis</name>
    <dbReference type="NCBI Taxonomy" id="207559"/>
    <lineage>
        <taxon>Bacteria</taxon>
        <taxon>Pseudomonadati</taxon>
        <taxon>Thermodesulfobacteriota</taxon>
        <taxon>Desulfovibrionia</taxon>
        <taxon>Desulfovibrionales</taxon>
        <taxon>Desulfovibrionaceae</taxon>
        <taxon>Oleidesulfovibrio</taxon>
    </lineage>
</organism>
<sequence length="309" mass="33841">MADSKLAQQHGVLVLNKPKGPTSAHCIARIKRLGQKKIGHAGTLDPMAQGVLLVLLGQCTKISGYLMEGGEKIYSGTLELGRTTDTWDDEGETLSTADWTHVTEEDVVRAVDLWTGSSEQQVPAYSAAKHKGQPLYKLAREGKETPVKTRRIEISQAETLAVELPFVRFRVHCSSGTYIRSLAHSLGNRLGCGAVLTELIREYSHPFSLDEAHDLDDVLAEPAELAGRVIPLDKALPHWPKLRLSAADEARVKNGMPHPYDPAEMASMPFTEGIRAVLLDPAGDPLALAETAYRNQVPVWTVLRGLWNT</sequence>
<gene>
    <name evidence="1" type="primary">truB</name>
    <name type="ordered locus">Dde_3165</name>
</gene>
<evidence type="ECO:0000255" key="1">
    <source>
        <dbReference type="HAMAP-Rule" id="MF_01080"/>
    </source>
</evidence>
<proteinExistence type="inferred from homology"/>
<feature type="chain" id="PRO_0000229356" description="tRNA pseudouridine synthase B">
    <location>
        <begin position="1"/>
        <end position="309"/>
    </location>
</feature>
<feature type="active site" description="Nucleophile" evidence="1">
    <location>
        <position position="45"/>
    </location>
</feature>
<reference key="1">
    <citation type="journal article" date="2011" name="J. Bacteriol.">
        <title>Complete genome sequence and updated annotation of Desulfovibrio alaskensis G20.</title>
        <authorList>
            <person name="Hauser L.J."/>
            <person name="Land M.L."/>
            <person name="Brown S.D."/>
            <person name="Larimer F."/>
            <person name="Keller K.L."/>
            <person name="Rapp-Giles B.J."/>
            <person name="Price M.N."/>
            <person name="Lin M."/>
            <person name="Bruce D.C."/>
            <person name="Detter J.C."/>
            <person name="Tapia R."/>
            <person name="Han C.S."/>
            <person name="Goodwin L.A."/>
            <person name="Cheng J.F."/>
            <person name="Pitluck S."/>
            <person name="Copeland A."/>
            <person name="Lucas S."/>
            <person name="Nolan M."/>
            <person name="Lapidus A.L."/>
            <person name="Palumbo A.V."/>
            <person name="Wall J.D."/>
        </authorList>
    </citation>
    <scope>NUCLEOTIDE SEQUENCE [LARGE SCALE GENOMIC DNA]</scope>
    <source>
        <strain>ATCC BAA-1058 / DSM 17464 / G20</strain>
    </source>
</reference>
<name>TRUB_OLEA2</name>
<keyword id="KW-0413">Isomerase</keyword>
<keyword id="KW-1185">Reference proteome</keyword>
<keyword id="KW-0819">tRNA processing</keyword>